<gene>
    <name type="primary">mnhD1</name>
    <name type="ordered locus">SE_0643</name>
</gene>
<keyword id="KW-0050">Antiport</keyword>
<keyword id="KW-1003">Cell membrane</keyword>
<keyword id="KW-0375">Hydrogen ion transport</keyword>
<keyword id="KW-0406">Ion transport</keyword>
<keyword id="KW-0472">Membrane</keyword>
<keyword id="KW-0915">Sodium</keyword>
<keyword id="KW-0739">Sodium transport</keyword>
<keyword id="KW-0812">Transmembrane</keyword>
<keyword id="KW-1133">Transmembrane helix</keyword>
<keyword id="KW-0813">Transport</keyword>
<proteinExistence type="inferred from homology"/>
<evidence type="ECO:0000250" key="1"/>
<evidence type="ECO:0000255" key="2"/>
<evidence type="ECO:0000305" key="3"/>
<reference key="1">
    <citation type="journal article" date="2003" name="Mol. Microbiol.">
        <title>Genome-based analysis of virulence genes in a non-biofilm-forming Staphylococcus epidermidis strain (ATCC 12228).</title>
        <authorList>
            <person name="Zhang Y.-Q."/>
            <person name="Ren S.-X."/>
            <person name="Li H.-L."/>
            <person name="Wang Y.-X."/>
            <person name="Fu G."/>
            <person name="Yang J."/>
            <person name="Qin Z.-Q."/>
            <person name="Miao Y.-G."/>
            <person name="Wang W.-Y."/>
            <person name="Chen R.-S."/>
            <person name="Shen Y."/>
            <person name="Chen Z."/>
            <person name="Yuan Z.-H."/>
            <person name="Zhao G.-P."/>
            <person name="Qu D."/>
            <person name="Danchin A."/>
            <person name="Wen Y.-M."/>
        </authorList>
    </citation>
    <scope>NUCLEOTIDE SEQUENCE [LARGE SCALE GENOMIC DNA]</scope>
    <source>
        <strain>ATCC 12228 / FDA PCI 1200</strain>
    </source>
</reference>
<organism>
    <name type="scientific">Staphylococcus epidermidis (strain ATCC 12228 / FDA PCI 1200)</name>
    <dbReference type="NCBI Taxonomy" id="176280"/>
    <lineage>
        <taxon>Bacteria</taxon>
        <taxon>Bacillati</taxon>
        <taxon>Bacillota</taxon>
        <taxon>Bacilli</taxon>
        <taxon>Bacillales</taxon>
        <taxon>Staphylococcaceae</taxon>
        <taxon>Staphylococcus</taxon>
    </lineage>
</organism>
<protein>
    <recommendedName>
        <fullName>Na(+)/H(+) antiporter subunit D1</fullName>
    </recommendedName>
    <alternativeName>
        <fullName>Mnh complex subunit D1</fullName>
    </alternativeName>
</protein>
<feature type="chain" id="PRO_0000372137" description="Na(+)/H(+) antiporter subunit D1">
    <location>
        <begin position="1"/>
        <end position="498"/>
    </location>
</feature>
<feature type="transmembrane region" description="Helical" evidence="2">
    <location>
        <begin position="5"/>
        <end position="25"/>
    </location>
</feature>
<feature type="transmembrane region" description="Helical" evidence="2">
    <location>
        <begin position="34"/>
        <end position="54"/>
    </location>
</feature>
<feature type="transmembrane region" description="Helical" evidence="2">
    <location>
        <begin position="72"/>
        <end position="92"/>
    </location>
</feature>
<feature type="transmembrane region" description="Helical" evidence="2">
    <location>
        <begin position="109"/>
        <end position="129"/>
    </location>
</feature>
<feature type="transmembrane region" description="Helical" evidence="2">
    <location>
        <begin position="131"/>
        <end position="151"/>
    </location>
</feature>
<feature type="transmembrane region" description="Helical" evidence="2">
    <location>
        <begin position="174"/>
        <end position="194"/>
    </location>
</feature>
<feature type="transmembrane region" description="Helical" evidence="2">
    <location>
        <begin position="211"/>
        <end position="231"/>
    </location>
</feature>
<feature type="transmembrane region" description="Helical" evidence="2">
    <location>
        <begin position="232"/>
        <end position="252"/>
    </location>
</feature>
<feature type="transmembrane region" description="Helical" evidence="2">
    <location>
        <begin position="277"/>
        <end position="297"/>
    </location>
</feature>
<feature type="transmembrane region" description="Helical" evidence="2">
    <location>
        <begin position="303"/>
        <end position="323"/>
    </location>
</feature>
<feature type="transmembrane region" description="Helical" evidence="2">
    <location>
        <begin position="331"/>
        <end position="351"/>
    </location>
</feature>
<feature type="transmembrane region" description="Helical" evidence="2">
    <location>
        <begin position="370"/>
        <end position="390"/>
    </location>
</feature>
<feature type="transmembrane region" description="Helical" evidence="2">
    <location>
        <begin position="407"/>
        <end position="427"/>
    </location>
</feature>
<feature type="transmembrane region" description="Helical" evidence="2">
    <location>
        <begin position="457"/>
        <end position="477"/>
    </location>
</feature>
<sequence length="498" mass="55181">MIESNLLVLTLVIPILTAILLIFIGKRPIIKRYVALVGTLLTLVIALINLKNVLRDGPIKVELGSWKAPYSIVFVVDIFSALLIITSIIITILVILYSYRSIGLDRERHYYYFSIMFMLIGIIGSFTTGDIFNLFVFFEVFLMSSYCLLVIGTTKIQLQETIKYILVNVVSSSFFVMGVAVLYSVVGTLNLAHISERLSQLSVHDSGLVNIVFILFIFVFATKAGVFPMYVWLPGAYYAPPVAIITFFGALLTKVGVYAIARTLSLFFNNTVSFSHYVILFLALLTIIFGCIGAIAYYDTKKIILYNIMIAVGVILVGIAMMNESGMTGAIYYTLHDMLVKASLFLLIGVMYKITKTTDLRHFGGLIKGYPILGWTFFIAALSLAGIPPFSGFYGKFYIVRATFEKGFYLSGIIVLLSSLIVLYSVIRIFLKGFFGEVEGYTLSKKVNVKYLTTIAVASTVITVIFGLSADTLFPIIKDGAETFVDPSQYIHSVLGGK</sequence>
<comment type="function">
    <text evidence="1">Mnh complex is a Na(+)/H(+) antiporter involved in Na(+) excretion.</text>
</comment>
<comment type="subunit">
    <text evidence="1">May form a heterooligomeric complex that consists of seven subunits: mnhA1, mnhB1, mnhC1, mnhD1, mnhE1, mnhF1 and mnhG1.</text>
</comment>
<comment type="subcellular location">
    <subcellularLocation>
        <location evidence="3">Cell membrane</location>
        <topology evidence="3">Multi-pass membrane protein</topology>
    </subcellularLocation>
</comment>
<comment type="similarity">
    <text evidence="3">Belongs to the CPA3 antiporters (TC 2.A.63) subunit D family.</text>
</comment>
<accession>Q8CPV1</accession>
<name>MNHD1_STAES</name>
<dbReference type="EMBL" id="AE015929">
    <property type="protein sequence ID" value="AAO04240.1"/>
    <property type="molecule type" value="Genomic_DNA"/>
</dbReference>
<dbReference type="RefSeq" id="NP_764198.1">
    <property type="nucleotide sequence ID" value="NC_004461.1"/>
</dbReference>
<dbReference type="RefSeq" id="WP_001831894.1">
    <property type="nucleotide sequence ID" value="NZ_WBME01000044.1"/>
</dbReference>
<dbReference type="SMR" id="Q8CPV1"/>
<dbReference type="DNASU" id="1057865"/>
<dbReference type="KEGG" id="sep:SE_0643"/>
<dbReference type="PATRIC" id="fig|176280.10.peg.616"/>
<dbReference type="eggNOG" id="COG0651">
    <property type="taxonomic scope" value="Bacteria"/>
</dbReference>
<dbReference type="HOGENOM" id="CLU_007100_9_2_9"/>
<dbReference type="OrthoDB" id="9811718at2"/>
<dbReference type="Proteomes" id="UP000001411">
    <property type="component" value="Chromosome"/>
</dbReference>
<dbReference type="GO" id="GO:0005886">
    <property type="term" value="C:plasma membrane"/>
    <property type="evidence" value="ECO:0007669"/>
    <property type="project" value="UniProtKB-SubCell"/>
</dbReference>
<dbReference type="GO" id="GO:0015297">
    <property type="term" value="F:antiporter activity"/>
    <property type="evidence" value="ECO:0007669"/>
    <property type="project" value="UniProtKB-KW"/>
</dbReference>
<dbReference type="GO" id="GO:0008137">
    <property type="term" value="F:NADH dehydrogenase (ubiquinone) activity"/>
    <property type="evidence" value="ECO:0007669"/>
    <property type="project" value="InterPro"/>
</dbReference>
<dbReference type="GO" id="GO:0042773">
    <property type="term" value="P:ATP synthesis coupled electron transport"/>
    <property type="evidence" value="ECO:0007669"/>
    <property type="project" value="InterPro"/>
</dbReference>
<dbReference type="GO" id="GO:0006814">
    <property type="term" value="P:sodium ion transport"/>
    <property type="evidence" value="ECO:0007669"/>
    <property type="project" value="UniProtKB-KW"/>
</dbReference>
<dbReference type="InterPro" id="IPR050586">
    <property type="entry name" value="CPA3_Na-H_Antiporter_D"/>
</dbReference>
<dbReference type="InterPro" id="IPR003918">
    <property type="entry name" value="NADH_UbQ_OxRdtase"/>
</dbReference>
<dbReference type="InterPro" id="IPR001750">
    <property type="entry name" value="ND/Mrp_TM"/>
</dbReference>
<dbReference type="NCBIfam" id="NF005818">
    <property type="entry name" value="PRK07691.1"/>
    <property type="match status" value="1"/>
</dbReference>
<dbReference type="PANTHER" id="PTHR42703:SF1">
    <property type="entry name" value="NA(+)_H(+) ANTIPORTER SUBUNIT D1"/>
    <property type="match status" value="1"/>
</dbReference>
<dbReference type="PANTHER" id="PTHR42703">
    <property type="entry name" value="NADH DEHYDROGENASE"/>
    <property type="match status" value="1"/>
</dbReference>
<dbReference type="Pfam" id="PF00361">
    <property type="entry name" value="Proton_antipo_M"/>
    <property type="match status" value="1"/>
</dbReference>
<dbReference type="PRINTS" id="PR01437">
    <property type="entry name" value="NUOXDRDTASE4"/>
</dbReference>